<proteinExistence type="evidence at transcript level"/>
<dbReference type="EMBL" id="BC109747">
    <property type="protein sequence ID" value="AAI09748.1"/>
    <property type="molecule type" value="mRNA"/>
</dbReference>
<dbReference type="RefSeq" id="NP_001070523.1">
    <property type="nucleotide sequence ID" value="NM_001077055.2"/>
</dbReference>
<dbReference type="FunCoup" id="Q32L62">
    <property type="interactions" value="80"/>
</dbReference>
<dbReference type="PaxDb" id="9913-ENSBTAP00000043053"/>
<dbReference type="GeneID" id="767995"/>
<dbReference type="KEGG" id="bta:767995"/>
<dbReference type="CTD" id="55363"/>
<dbReference type="eggNOG" id="ENOG502SBFR">
    <property type="taxonomic scope" value="Eukaryota"/>
</dbReference>
<dbReference type="InParanoid" id="Q32L62"/>
<dbReference type="OrthoDB" id="9950769at2759"/>
<dbReference type="Proteomes" id="UP000009136">
    <property type="component" value="Unplaced"/>
</dbReference>
<dbReference type="GO" id="GO:0005654">
    <property type="term" value="C:nucleoplasm"/>
    <property type="evidence" value="ECO:0000318"/>
    <property type="project" value="GO_Central"/>
</dbReference>
<dbReference type="GO" id="GO:0030154">
    <property type="term" value="P:cell differentiation"/>
    <property type="evidence" value="ECO:0007669"/>
    <property type="project" value="UniProtKB-KW"/>
</dbReference>
<dbReference type="GO" id="GO:0045667">
    <property type="term" value="P:regulation of osteoblast differentiation"/>
    <property type="evidence" value="ECO:0000318"/>
    <property type="project" value="GO_Central"/>
</dbReference>
<dbReference type="InterPro" id="IPR033272">
    <property type="entry name" value="Hemogen"/>
</dbReference>
<dbReference type="PANTHER" id="PTHR15993">
    <property type="entry name" value="HEMOGEN"/>
    <property type="match status" value="1"/>
</dbReference>
<dbReference type="PANTHER" id="PTHR15993:SF6">
    <property type="entry name" value="HEMOGEN"/>
    <property type="match status" value="1"/>
</dbReference>
<feature type="chain" id="PRO_0000245360" description="Hemogen">
    <location>
        <begin position="1"/>
        <end position="447"/>
    </location>
</feature>
<feature type="region of interest" description="Disordered" evidence="5">
    <location>
        <begin position="1"/>
        <end position="91"/>
    </location>
</feature>
<feature type="region of interest" description="Necessary for nuclear localization" evidence="1">
    <location>
        <begin position="7"/>
        <end position="86"/>
    </location>
</feature>
<feature type="region of interest" description="Disordered" evidence="5">
    <location>
        <begin position="137"/>
        <end position="156"/>
    </location>
</feature>
<feature type="region of interest" description="Disordered" evidence="5">
    <location>
        <begin position="210"/>
        <end position="280"/>
    </location>
</feature>
<feature type="region of interest" description="Disordered" evidence="5">
    <location>
        <begin position="306"/>
        <end position="337"/>
    </location>
</feature>
<feature type="compositionally biased region" description="Basic and acidic residues" evidence="5">
    <location>
        <begin position="14"/>
        <end position="25"/>
    </location>
</feature>
<feature type="compositionally biased region" description="Basic and acidic residues" evidence="5">
    <location>
        <begin position="35"/>
        <end position="49"/>
    </location>
</feature>
<feature type="compositionally biased region" description="Basic residues" evidence="5">
    <location>
        <begin position="59"/>
        <end position="78"/>
    </location>
</feature>
<feature type="compositionally biased region" description="Basic and acidic residues" evidence="5">
    <location>
        <begin position="306"/>
        <end position="316"/>
    </location>
</feature>
<feature type="modified residue" description="Phosphoserine" evidence="2">
    <location>
        <position position="89"/>
    </location>
</feature>
<feature type="modified residue" description="Phosphoserine" evidence="3">
    <location>
        <position position="122"/>
    </location>
</feature>
<feature type="modified residue" description="Phosphoserine" evidence="4">
    <location>
        <position position="200"/>
    </location>
</feature>
<feature type="modified residue" description="Phosphothreonine" evidence="4">
    <location>
        <position position="217"/>
    </location>
</feature>
<organism>
    <name type="scientific">Bos taurus</name>
    <name type="common">Bovine</name>
    <dbReference type="NCBI Taxonomy" id="9913"/>
    <lineage>
        <taxon>Eukaryota</taxon>
        <taxon>Metazoa</taxon>
        <taxon>Chordata</taxon>
        <taxon>Craniata</taxon>
        <taxon>Vertebrata</taxon>
        <taxon>Euteleostomi</taxon>
        <taxon>Mammalia</taxon>
        <taxon>Eutheria</taxon>
        <taxon>Laurasiatheria</taxon>
        <taxon>Artiodactyla</taxon>
        <taxon>Ruminantia</taxon>
        <taxon>Pecora</taxon>
        <taxon>Bovidae</taxon>
        <taxon>Bovinae</taxon>
        <taxon>Bos</taxon>
    </lineage>
</organism>
<reference key="1">
    <citation type="submission" date="2005-11" db="EMBL/GenBank/DDBJ databases">
        <authorList>
            <consortium name="NIH - Mammalian Gene Collection (MGC) project"/>
        </authorList>
    </citation>
    <scope>NUCLEOTIDE SEQUENCE [LARGE SCALE MRNA]</scope>
    <source>
        <strain>Crossbred X Angus</strain>
        <tissue>Liver</tissue>
    </source>
</reference>
<accession>Q32L62</accession>
<protein>
    <recommendedName>
        <fullName>Hemogen</fullName>
    </recommendedName>
    <alternativeName>
        <fullName>Hemopoietic gene protein</fullName>
    </alternativeName>
</protein>
<evidence type="ECO:0000250" key="1"/>
<evidence type="ECO:0000250" key="2">
    <source>
        <dbReference type="UniProtKB" id="Q6AZ54"/>
    </source>
</evidence>
<evidence type="ECO:0000250" key="3">
    <source>
        <dbReference type="UniProtKB" id="Q9BXL5"/>
    </source>
</evidence>
<evidence type="ECO:0000250" key="4">
    <source>
        <dbReference type="UniProtKB" id="Q9ERZ0"/>
    </source>
</evidence>
<evidence type="ECO:0000256" key="5">
    <source>
        <dbReference type="SAM" id="MobiDB-lite"/>
    </source>
</evidence>
<comment type="function">
    <text evidence="1">Regulates the proliferation and differentiation of hematopoietic cells. Overexpression block the TPA-induced megakaryocytic differentiation in the K562 cell model. May also prevent cell apoptosis through the activation of the nuclear factor-kappa B (NF-kB) (By similarity).</text>
</comment>
<comment type="subcellular location">
    <subcellularLocation>
        <location evidence="1">Nucleus</location>
    </subcellularLocation>
</comment>
<sequence>MDLGKDQSLSKLHQTPDHHQEESHVPEVIGTWSLRNREQLRKRKAEAQEKQTSQWQYREKKHKRQRTGKRSERGRKRQQNTEMKVELPSQLEKEMMEKAPAPGEKEIEPPGSVTEVLLPAVSPQRVAPAKHLSEVGQESVTLQENSSEYQATAVQNQPSEICQDMAESEDLSPKMCQEIAIFQDQPFKMFRNMAQPEDVSPKTCQEDIAAKVLSSKTSEDTTDLEECSLEAHPKPDMPKASTLETYQKRPEPEEPDSETGQGIVETESFVSNTQQEMAVPKELATEIHQETVEPEHFSHKIYREIAMSKDPSHKTTQETSVPDKYPPEMYQETPGSEEYSLEIYQETTGPEAYAPEIYQETPGPEDLSTKTYKDKDVPKECFPKLYQEIGGPQDQDSKAHQEDAKDVYTFPQEMKENPKAEEPEIIEIPNVPQESNPENDIYSYVLF</sequence>
<name>HEMGN_BOVIN</name>
<gene>
    <name type="primary">HEMGN</name>
</gene>
<keyword id="KW-0217">Developmental protein</keyword>
<keyword id="KW-0221">Differentiation</keyword>
<keyword id="KW-0539">Nucleus</keyword>
<keyword id="KW-0597">Phosphoprotein</keyword>
<keyword id="KW-1185">Reference proteome</keyword>